<reference key="1">
    <citation type="journal article" date="2004" name="Science">
        <title>The genomic sequence of the accidental pathogen Legionella pneumophila.</title>
        <authorList>
            <person name="Chien M."/>
            <person name="Morozova I."/>
            <person name="Shi S."/>
            <person name="Sheng H."/>
            <person name="Chen J."/>
            <person name="Gomez S.M."/>
            <person name="Asamani G."/>
            <person name="Hill K."/>
            <person name="Nuara J."/>
            <person name="Feder M."/>
            <person name="Rineer J."/>
            <person name="Greenberg J.J."/>
            <person name="Steshenko V."/>
            <person name="Park S.H."/>
            <person name="Zhao B."/>
            <person name="Teplitskaya E."/>
            <person name="Edwards J.R."/>
            <person name="Pampou S."/>
            <person name="Georghiou A."/>
            <person name="Chou I.-C."/>
            <person name="Iannuccilli W."/>
            <person name="Ulz M.E."/>
            <person name="Kim D.H."/>
            <person name="Geringer-Sameth A."/>
            <person name="Goldsberry C."/>
            <person name="Morozov P."/>
            <person name="Fischer S.G."/>
            <person name="Segal G."/>
            <person name="Qu X."/>
            <person name="Rzhetsky A."/>
            <person name="Zhang P."/>
            <person name="Cayanis E."/>
            <person name="De Jong P.J."/>
            <person name="Ju J."/>
            <person name="Kalachikov S."/>
            <person name="Shuman H.A."/>
            <person name="Russo J.J."/>
        </authorList>
    </citation>
    <scope>NUCLEOTIDE SEQUENCE [LARGE SCALE GENOMIC DNA]</scope>
    <source>
        <strain>Philadelphia 1 / ATCC 33152 / DSM 7513</strain>
    </source>
</reference>
<gene>
    <name evidence="1" type="primary">hypA</name>
    <name type="ordered locus">lpg2476</name>
</gene>
<organism>
    <name type="scientific">Legionella pneumophila subsp. pneumophila (strain Philadelphia 1 / ATCC 33152 / DSM 7513)</name>
    <dbReference type="NCBI Taxonomy" id="272624"/>
    <lineage>
        <taxon>Bacteria</taxon>
        <taxon>Pseudomonadati</taxon>
        <taxon>Pseudomonadota</taxon>
        <taxon>Gammaproteobacteria</taxon>
        <taxon>Legionellales</taxon>
        <taxon>Legionellaceae</taxon>
        <taxon>Legionella</taxon>
    </lineage>
</organism>
<evidence type="ECO:0000255" key="1">
    <source>
        <dbReference type="HAMAP-Rule" id="MF_00213"/>
    </source>
</evidence>
<protein>
    <recommendedName>
        <fullName evidence="1">Hydrogenase maturation factor HypA</fullName>
    </recommendedName>
</protein>
<comment type="function">
    <text evidence="1">Involved in the maturation of [NiFe] hydrogenases. Required for nickel insertion into the metal center of the hydrogenase.</text>
</comment>
<comment type="similarity">
    <text evidence="1">Belongs to the HypA/HybF family.</text>
</comment>
<keyword id="KW-0479">Metal-binding</keyword>
<keyword id="KW-0533">Nickel</keyword>
<keyword id="KW-1185">Reference proteome</keyword>
<keyword id="KW-0862">Zinc</keyword>
<accession>Q5ZSP1</accession>
<dbReference type="EMBL" id="AE017354">
    <property type="protein sequence ID" value="AAU28536.1"/>
    <property type="molecule type" value="Genomic_DNA"/>
</dbReference>
<dbReference type="RefSeq" id="WP_010948178.1">
    <property type="nucleotide sequence ID" value="NC_002942.5"/>
</dbReference>
<dbReference type="RefSeq" id="YP_096483.1">
    <property type="nucleotide sequence ID" value="NC_002942.5"/>
</dbReference>
<dbReference type="SMR" id="Q5ZSP1"/>
<dbReference type="STRING" id="272624.lpg2476"/>
<dbReference type="PaxDb" id="272624-lpg2476"/>
<dbReference type="GeneID" id="57036470"/>
<dbReference type="KEGG" id="lpn:lpg2476"/>
<dbReference type="PATRIC" id="fig|272624.6.peg.2625"/>
<dbReference type="eggNOG" id="COG0375">
    <property type="taxonomic scope" value="Bacteria"/>
</dbReference>
<dbReference type="HOGENOM" id="CLU_126929_3_0_6"/>
<dbReference type="OrthoDB" id="288014at2"/>
<dbReference type="Proteomes" id="UP000000609">
    <property type="component" value="Chromosome"/>
</dbReference>
<dbReference type="GO" id="GO:0016151">
    <property type="term" value="F:nickel cation binding"/>
    <property type="evidence" value="ECO:0007669"/>
    <property type="project" value="UniProtKB-UniRule"/>
</dbReference>
<dbReference type="GO" id="GO:0008270">
    <property type="term" value="F:zinc ion binding"/>
    <property type="evidence" value="ECO:0007669"/>
    <property type="project" value="UniProtKB-UniRule"/>
</dbReference>
<dbReference type="GO" id="GO:0051604">
    <property type="term" value="P:protein maturation"/>
    <property type="evidence" value="ECO:0007669"/>
    <property type="project" value="InterPro"/>
</dbReference>
<dbReference type="GO" id="GO:0036211">
    <property type="term" value="P:protein modification process"/>
    <property type="evidence" value="ECO:0007669"/>
    <property type="project" value="UniProtKB-UniRule"/>
</dbReference>
<dbReference type="Gene3D" id="3.30.2320.80">
    <property type="match status" value="1"/>
</dbReference>
<dbReference type="HAMAP" id="MF_00213">
    <property type="entry name" value="HypA_HybF"/>
    <property type="match status" value="1"/>
</dbReference>
<dbReference type="InterPro" id="IPR020538">
    <property type="entry name" value="Hydgase_Ni_incorp_HypA/HybF_CS"/>
</dbReference>
<dbReference type="InterPro" id="IPR000688">
    <property type="entry name" value="HypA/HybF"/>
</dbReference>
<dbReference type="NCBIfam" id="TIGR00100">
    <property type="entry name" value="hypA"/>
    <property type="match status" value="1"/>
</dbReference>
<dbReference type="PANTHER" id="PTHR34535">
    <property type="entry name" value="HYDROGENASE MATURATION FACTOR HYPA"/>
    <property type="match status" value="1"/>
</dbReference>
<dbReference type="PANTHER" id="PTHR34535:SF3">
    <property type="entry name" value="HYDROGENASE MATURATION FACTOR HYPA"/>
    <property type="match status" value="1"/>
</dbReference>
<dbReference type="Pfam" id="PF01155">
    <property type="entry name" value="HypA"/>
    <property type="match status" value="1"/>
</dbReference>
<dbReference type="PIRSF" id="PIRSF004761">
    <property type="entry name" value="Hydrgn_mat_HypA"/>
    <property type="match status" value="1"/>
</dbReference>
<dbReference type="PROSITE" id="PS01249">
    <property type="entry name" value="HYPA"/>
    <property type="match status" value="1"/>
</dbReference>
<proteinExistence type="inferred from homology"/>
<sequence>MHELWLCKRIVEIIKQQATGNKCRKVKKIVLEIGQLVAVDKHALNFSFKVITQGTIAQNAELSIVEIPGEAICNSCQQIVPMKQYYDECLVCGNHSLTLTKGEELKVKSMVVE</sequence>
<name>HYPA_LEGPH</name>
<feature type="chain" id="PRO_1000023834" description="Hydrogenase maturation factor HypA">
    <location>
        <begin position="1"/>
        <end position="113"/>
    </location>
</feature>
<feature type="binding site" evidence="1">
    <location>
        <position position="2"/>
    </location>
    <ligand>
        <name>Ni(2+)</name>
        <dbReference type="ChEBI" id="CHEBI:49786"/>
    </ligand>
</feature>
<feature type="binding site" evidence="1">
    <location>
        <position position="73"/>
    </location>
    <ligand>
        <name>Zn(2+)</name>
        <dbReference type="ChEBI" id="CHEBI:29105"/>
    </ligand>
</feature>
<feature type="binding site" evidence="1">
    <location>
        <position position="76"/>
    </location>
    <ligand>
        <name>Zn(2+)</name>
        <dbReference type="ChEBI" id="CHEBI:29105"/>
    </ligand>
</feature>
<feature type="binding site" evidence="1">
    <location>
        <position position="89"/>
    </location>
    <ligand>
        <name>Zn(2+)</name>
        <dbReference type="ChEBI" id="CHEBI:29105"/>
    </ligand>
</feature>
<feature type="binding site" evidence="1">
    <location>
        <position position="92"/>
    </location>
    <ligand>
        <name>Zn(2+)</name>
        <dbReference type="ChEBI" id="CHEBI:29105"/>
    </ligand>
</feature>